<sequence>MLQPKRRKYRKEQKGRNTGKATRGNAVSFGEFGLKAIGRGRLTARQIEAARRAMTRHIKRGGRIWIRIFPDKPISQKPAEVRMGNGKGNPEYYVAEIQPGKMLYEMDGVSEELAREAFRLAAAKLPIQTTFIVRQLGA</sequence>
<evidence type="ECO:0000255" key="1">
    <source>
        <dbReference type="HAMAP-Rule" id="MF_01342"/>
    </source>
</evidence>
<evidence type="ECO:0000256" key="2">
    <source>
        <dbReference type="SAM" id="MobiDB-lite"/>
    </source>
</evidence>
<evidence type="ECO:0000305" key="3"/>
<reference key="1">
    <citation type="submission" date="2007-10" db="EMBL/GenBank/DDBJ databases">
        <title>Complete sequence of chromosome 1 of Burkholderia multivorans ATCC 17616.</title>
        <authorList>
            <person name="Copeland A."/>
            <person name="Lucas S."/>
            <person name="Lapidus A."/>
            <person name="Barry K."/>
            <person name="Glavina del Rio T."/>
            <person name="Dalin E."/>
            <person name="Tice H."/>
            <person name="Pitluck S."/>
            <person name="Chain P."/>
            <person name="Malfatti S."/>
            <person name="Shin M."/>
            <person name="Vergez L."/>
            <person name="Schmutz J."/>
            <person name="Larimer F."/>
            <person name="Land M."/>
            <person name="Hauser L."/>
            <person name="Kyrpides N."/>
            <person name="Kim E."/>
            <person name="Tiedje J."/>
            <person name="Richardson P."/>
        </authorList>
    </citation>
    <scope>NUCLEOTIDE SEQUENCE [LARGE SCALE GENOMIC DNA]</scope>
    <source>
        <strain>ATCC 17616 / 249</strain>
    </source>
</reference>
<reference key="2">
    <citation type="submission" date="2007-04" db="EMBL/GenBank/DDBJ databases">
        <title>Complete genome sequence of Burkholderia multivorans ATCC 17616.</title>
        <authorList>
            <person name="Ohtsubo Y."/>
            <person name="Yamashita A."/>
            <person name="Kurokawa K."/>
            <person name="Takami H."/>
            <person name="Yuhara S."/>
            <person name="Nishiyama E."/>
            <person name="Endo R."/>
            <person name="Miyazaki R."/>
            <person name="Ono A."/>
            <person name="Yano K."/>
            <person name="Ito M."/>
            <person name="Sota M."/>
            <person name="Yuji N."/>
            <person name="Hattori M."/>
            <person name="Tsuda M."/>
        </authorList>
    </citation>
    <scope>NUCLEOTIDE SEQUENCE [LARGE SCALE GENOMIC DNA]</scope>
    <source>
        <strain>ATCC 17616 / 249</strain>
    </source>
</reference>
<dbReference type="EMBL" id="CP000868">
    <property type="protein sequence ID" value="ABX13951.1"/>
    <property type="molecule type" value="Genomic_DNA"/>
</dbReference>
<dbReference type="EMBL" id="AP009385">
    <property type="protein sequence ID" value="BAG44883.1"/>
    <property type="molecule type" value="Genomic_DNA"/>
</dbReference>
<dbReference type="RefSeq" id="WP_006400653.1">
    <property type="nucleotide sequence ID" value="NC_010804.1"/>
</dbReference>
<dbReference type="SMR" id="A9ADK0"/>
<dbReference type="STRING" id="395019.BMULJ_02998"/>
<dbReference type="GeneID" id="93171010"/>
<dbReference type="KEGG" id="bmj:BMULJ_02998"/>
<dbReference type="KEGG" id="bmu:Bmul_0256"/>
<dbReference type="eggNOG" id="COG0197">
    <property type="taxonomic scope" value="Bacteria"/>
</dbReference>
<dbReference type="HOGENOM" id="CLU_078858_2_1_4"/>
<dbReference type="Proteomes" id="UP000008815">
    <property type="component" value="Chromosome 1"/>
</dbReference>
<dbReference type="GO" id="GO:0022625">
    <property type="term" value="C:cytosolic large ribosomal subunit"/>
    <property type="evidence" value="ECO:0007669"/>
    <property type="project" value="TreeGrafter"/>
</dbReference>
<dbReference type="GO" id="GO:0019843">
    <property type="term" value="F:rRNA binding"/>
    <property type="evidence" value="ECO:0007669"/>
    <property type="project" value="UniProtKB-UniRule"/>
</dbReference>
<dbReference type="GO" id="GO:0003735">
    <property type="term" value="F:structural constituent of ribosome"/>
    <property type="evidence" value="ECO:0007669"/>
    <property type="project" value="InterPro"/>
</dbReference>
<dbReference type="GO" id="GO:0000049">
    <property type="term" value="F:tRNA binding"/>
    <property type="evidence" value="ECO:0007669"/>
    <property type="project" value="UniProtKB-KW"/>
</dbReference>
<dbReference type="GO" id="GO:0006412">
    <property type="term" value="P:translation"/>
    <property type="evidence" value="ECO:0007669"/>
    <property type="project" value="UniProtKB-UniRule"/>
</dbReference>
<dbReference type="CDD" id="cd01433">
    <property type="entry name" value="Ribosomal_L16_L10e"/>
    <property type="match status" value="1"/>
</dbReference>
<dbReference type="FunFam" id="3.90.1170.10:FF:000001">
    <property type="entry name" value="50S ribosomal protein L16"/>
    <property type="match status" value="1"/>
</dbReference>
<dbReference type="Gene3D" id="3.90.1170.10">
    <property type="entry name" value="Ribosomal protein L10e/L16"/>
    <property type="match status" value="1"/>
</dbReference>
<dbReference type="HAMAP" id="MF_01342">
    <property type="entry name" value="Ribosomal_uL16"/>
    <property type="match status" value="1"/>
</dbReference>
<dbReference type="InterPro" id="IPR047873">
    <property type="entry name" value="Ribosomal_uL16"/>
</dbReference>
<dbReference type="InterPro" id="IPR000114">
    <property type="entry name" value="Ribosomal_uL16_bact-type"/>
</dbReference>
<dbReference type="InterPro" id="IPR020798">
    <property type="entry name" value="Ribosomal_uL16_CS"/>
</dbReference>
<dbReference type="InterPro" id="IPR016180">
    <property type="entry name" value="Ribosomal_uL16_dom"/>
</dbReference>
<dbReference type="InterPro" id="IPR036920">
    <property type="entry name" value="Ribosomal_uL16_sf"/>
</dbReference>
<dbReference type="NCBIfam" id="TIGR01164">
    <property type="entry name" value="rplP_bact"/>
    <property type="match status" value="1"/>
</dbReference>
<dbReference type="PANTHER" id="PTHR12220">
    <property type="entry name" value="50S/60S RIBOSOMAL PROTEIN L16"/>
    <property type="match status" value="1"/>
</dbReference>
<dbReference type="PANTHER" id="PTHR12220:SF13">
    <property type="entry name" value="LARGE RIBOSOMAL SUBUNIT PROTEIN UL16M"/>
    <property type="match status" value="1"/>
</dbReference>
<dbReference type="Pfam" id="PF00252">
    <property type="entry name" value="Ribosomal_L16"/>
    <property type="match status" value="1"/>
</dbReference>
<dbReference type="PRINTS" id="PR00060">
    <property type="entry name" value="RIBOSOMALL16"/>
</dbReference>
<dbReference type="SUPFAM" id="SSF54686">
    <property type="entry name" value="Ribosomal protein L16p/L10e"/>
    <property type="match status" value="1"/>
</dbReference>
<dbReference type="PROSITE" id="PS00586">
    <property type="entry name" value="RIBOSOMAL_L16_1"/>
    <property type="match status" value="1"/>
</dbReference>
<organism>
    <name type="scientific">Burkholderia multivorans (strain ATCC 17616 / 249)</name>
    <dbReference type="NCBI Taxonomy" id="395019"/>
    <lineage>
        <taxon>Bacteria</taxon>
        <taxon>Pseudomonadati</taxon>
        <taxon>Pseudomonadota</taxon>
        <taxon>Betaproteobacteria</taxon>
        <taxon>Burkholderiales</taxon>
        <taxon>Burkholderiaceae</taxon>
        <taxon>Burkholderia</taxon>
        <taxon>Burkholderia cepacia complex</taxon>
    </lineage>
</organism>
<name>RL16_BURM1</name>
<protein>
    <recommendedName>
        <fullName evidence="1">Large ribosomal subunit protein uL16</fullName>
    </recommendedName>
    <alternativeName>
        <fullName evidence="3">50S ribosomal protein L16</fullName>
    </alternativeName>
</protein>
<keyword id="KW-1185">Reference proteome</keyword>
<keyword id="KW-0687">Ribonucleoprotein</keyword>
<keyword id="KW-0689">Ribosomal protein</keyword>
<keyword id="KW-0694">RNA-binding</keyword>
<keyword id="KW-0699">rRNA-binding</keyword>
<keyword id="KW-0820">tRNA-binding</keyword>
<proteinExistence type="inferred from homology"/>
<feature type="chain" id="PRO_1000142938" description="Large ribosomal subunit protein uL16">
    <location>
        <begin position="1"/>
        <end position="138"/>
    </location>
</feature>
<feature type="region of interest" description="Disordered" evidence="2">
    <location>
        <begin position="1"/>
        <end position="24"/>
    </location>
</feature>
<feature type="compositionally biased region" description="Basic residues" evidence="2">
    <location>
        <begin position="1"/>
        <end position="13"/>
    </location>
</feature>
<accession>A9ADK0</accession>
<comment type="function">
    <text evidence="1">Binds 23S rRNA and is also seen to make contacts with the A and possibly P site tRNAs.</text>
</comment>
<comment type="subunit">
    <text evidence="1">Part of the 50S ribosomal subunit.</text>
</comment>
<comment type="similarity">
    <text evidence="1">Belongs to the universal ribosomal protein uL16 family.</text>
</comment>
<gene>
    <name evidence="1" type="primary">rplP</name>
    <name type="ordered locus">Bmul_0256</name>
    <name type="ordered locus">BMULJ_02998</name>
</gene>